<name>APOC1_BRALU</name>
<reference key="1">
    <citation type="journal article" date="2016" name="Genome Res.">
        <title>Genomes of Ellobius species provide insight into the evolutionary dynamics of mammalian sex chromosomes.</title>
        <authorList>
            <person name="Mulugeta E."/>
            <person name="Wassenaar E."/>
            <person name="Sleddens-Linkels E."/>
            <person name="Van Ijcken W.F."/>
            <person name="Heard E."/>
            <person name="Grootegoed J.A."/>
            <person name="Just W."/>
            <person name="Gribnau J."/>
            <person name="Baarends W.M."/>
        </authorList>
    </citation>
    <scope>NUCLEOTIDE SEQUENCE [LARGE SCALE GENOMIC DNA]</scope>
    <source>
        <tissue>Liver</tissue>
    </source>
</reference>
<feature type="signal peptide" evidence="5">
    <location>
        <begin position="1"/>
        <end position="26"/>
    </location>
</feature>
<feature type="chain" id="PRO_0000453983" description="Apolipoprotein C-I">
    <location>
        <begin position="27"/>
        <end position="88"/>
    </location>
</feature>
<feature type="chain" id="PRO_0000453984" description="Truncated apolipoprotein C-I" evidence="4">
    <location>
        <begin position="29"/>
        <end position="88"/>
    </location>
</feature>
<proteinExistence type="inferred from homology"/>
<protein>
    <recommendedName>
        <fullName>Apolipoprotein C-I</fullName>
        <shortName>Apo-CI</shortName>
        <shortName>ApoC-I</shortName>
    </recommendedName>
    <alternativeName>
        <fullName>Apolipoprotein C1</fullName>
    </alternativeName>
    <component>
        <recommendedName>
            <fullName>Truncated apolipoprotein C-I</fullName>
        </recommendedName>
    </component>
</protein>
<comment type="function">
    <text evidence="1 2 3">Inhibitor of lipoprotein binding to the low density lipoprotein (LDL) receptor, LDL receptor-related protein, and very low density lipoprotein (VLDL) receptor. Associates with high density lipoproteins (HDL) and the triacylglycerol-rich lipoproteins in the plasma and makes up about 10% of the protein of the VLDL and 2% of that of HDL. Appears to interfere directly with fatty acid uptake and is also the major plasma inhibitor of cholesteryl ester transfer protein (CETP). Modulates the interaction of APOE with beta-migrating VLDL and inhibits binding of beta-VLDL to the LDL receptor-related protein (By similarity). Binds free fatty acids and reduces their intracellular esterification (By similarity).</text>
</comment>
<comment type="subcellular location">
    <subcellularLocation>
        <location evidence="1">Secreted</location>
    </subcellularLocation>
</comment>
<comment type="similarity">
    <text evidence="6">Belongs to the apolipoprotein C1 family.</text>
</comment>
<dbReference type="EMBL" id="LOJG01068708">
    <property type="status" value="NOT_ANNOTATED_CDS"/>
    <property type="molecule type" value="Genomic_DNA"/>
</dbReference>
<dbReference type="SMR" id="P0DUX3"/>
<dbReference type="GO" id="GO:0034364">
    <property type="term" value="C:high-density lipoprotein particle"/>
    <property type="evidence" value="ECO:0007669"/>
    <property type="project" value="TreeGrafter"/>
</dbReference>
<dbReference type="GO" id="GO:0034361">
    <property type="term" value="C:very-low-density lipoprotein particle"/>
    <property type="evidence" value="ECO:0007669"/>
    <property type="project" value="UniProtKB-KW"/>
</dbReference>
<dbReference type="GO" id="GO:0005504">
    <property type="term" value="F:fatty acid binding"/>
    <property type="evidence" value="ECO:0007669"/>
    <property type="project" value="TreeGrafter"/>
</dbReference>
<dbReference type="GO" id="GO:0004859">
    <property type="term" value="F:phospholipase inhibitor activity"/>
    <property type="evidence" value="ECO:0007669"/>
    <property type="project" value="TreeGrafter"/>
</dbReference>
<dbReference type="GO" id="GO:0006869">
    <property type="term" value="P:lipid transport"/>
    <property type="evidence" value="ECO:0007669"/>
    <property type="project" value="UniProtKB-KW"/>
</dbReference>
<dbReference type="GO" id="GO:0042157">
    <property type="term" value="P:lipoprotein metabolic process"/>
    <property type="evidence" value="ECO:0007669"/>
    <property type="project" value="InterPro"/>
</dbReference>
<dbReference type="GO" id="GO:0032375">
    <property type="term" value="P:negative regulation of cholesterol transport"/>
    <property type="evidence" value="ECO:0007669"/>
    <property type="project" value="TreeGrafter"/>
</dbReference>
<dbReference type="GO" id="GO:0050995">
    <property type="term" value="P:negative regulation of lipid catabolic process"/>
    <property type="evidence" value="ECO:0007669"/>
    <property type="project" value="TreeGrafter"/>
</dbReference>
<dbReference type="GO" id="GO:0010916">
    <property type="term" value="P:negative regulation of very-low-density lipoprotein particle clearance"/>
    <property type="evidence" value="ECO:0007669"/>
    <property type="project" value="TreeGrafter"/>
</dbReference>
<dbReference type="GO" id="GO:0006641">
    <property type="term" value="P:triglyceride metabolic process"/>
    <property type="evidence" value="ECO:0007669"/>
    <property type="project" value="TreeGrafter"/>
</dbReference>
<dbReference type="GO" id="GO:0034447">
    <property type="term" value="P:very-low-density lipoprotein particle clearance"/>
    <property type="evidence" value="ECO:0007669"/>
    <property type="project" value="TreeGrafter"/>
</dbReference>
<dbReference type="Gene3D" id="4.10.260.30">
    <property type="entry name" value="Apolipoprotein C-I"/>
    <property type="match status" value="1"/>
</dbReference>
<dbReference type="InterPro" id="IPR043081">
    <property type="entry name" value="ApoC-1_sf"/>
</dbReference>
<dbReference type="InterPro" id="IPR006781">
    <property type="entry name" value="ApoC-I"/>
</dbReference>
<dbReference type="PANTHER" id="PTHR16565">
    <property type="entry name" value="APOLIPOPROTEIN C-I"/>
    <property type="match status" value="1"/>
</dbReference>
<dbReference type="PANTHER" id="PTHR16565:SF2">
    <property type="entry name" value="APOLIPOPROTEIN C-I"/>
    <property type="match status" value="1"/>
</dbReference>
<dbReference type="Pfam" id="PF04691">
    <property type="entry name" value="ApoC-I"/>
    <property type="match status" value="1"/>
</dbReference>
<accession>P0DUX3</accession>
<organism>
    <name type="scientific">Bramus lutescens</name>
    <name type="common">Transcaucasian mole vole</name>
    <name type="synonym">Ellobius lutescens</name>
    <dbReference type="NCBI Taxonomy" id="3370998"/>
    <lineage>
        <taxon>Eukaryota</taxon>
        <taxon>Metazoa</taxon>
        <taxon>Chordata</taxon>
        <taxon>Craniata</taxon>
        <taxon>Vertebrata</taxon>
        <taxon>Euteleostomi</taxon>
        <taxon>Mammalia</taxon>
        <taxon>Eutheria</taxon>
        <taxon>Euarchontoglires</taxon>
        <taxon>Glires</taxon>
        <taxon>Rodentia</taxon>
        <taxon>Myomorpha</taxon>
        <taxon>Muroidea</taxon>
        <taxon>Cricetidae</taxon>
        <taxon>Bramus</taxon>
    </lineage>
</organism>
<gene>
    <name type="primary">APOC1</name>
</gene>
<evidence type="ECO:0000250" key="1">
    <source>
        <dbReference type="UniProtKB" id="P02654"/>
    </source>
</evidence>
<evidence type="ECO:0000250" key="2">
    <source>
        <dbReference type="UniProtKB" id="P33047"/>
    </source>
</evidence>
<evidence type="ECO:0000250" key="3">
    <source>
        <dbReference type="UniProtKB" id="P34928"/>
    </source>
</evidence>
<evidence type="ECO:0000250" key="4">
    <source>
        <dbReference type="UniProtKB" id="P86336"/>
    </source>
</evidence>
<evidence type="ECO:0000255" key="5"/>
<evidence type="ECO:0000305" key="6"/>
<sequence>MRLFISLPVLIVVLAMALEGPAPAQATPDLSSTFENLPDKLKEFGNTLEDKARAAIEHIKQKEFLTKTRTWISETFGKMKEKIKTTFA</sequence>
<keyword id="KW-0445">Lipid transport</keyword>
<keyword id="KW-0964">Secreted</keyword>
<keyword id="KW-0732">Signal</keyword>
<keyword id="KW-0813">Transport</keyword>
<keyword id="KW-0850">VLDL</keyword>